<feature type="chain" id="PRO_1000149241" description="2-isopropylmalate synthase">
    <location>
        <begin position="1"/>
        <end position="539"/>
    </location>
</feature>
<feature type="domain" description="Pyruvate carboxyltransferase" evidence="1">
    <location>
        <begin position="8"/>
        <end position="269"/>
    </location>
</feature>
<feature type="region of interest" description="Regulatory domain" evidence="1">
    <location>
        <begin position="408"/>
        <end position="539"/>
    </location>
</feature>
<feature type="binding site" evidence="1">
    <location>
        <position position="17"/>
    </location>
    <ligand>
        <name>Mn(2+)</name>
        <dbReference type="ChEBI" id="CHEBI:29035"/>
    </ligand>
</feature>
<feature type="binding site" evidence="1">
    <location>
        <position position="208"/>
    </location>
    <ligand>
        <name>Mn(2+)</name>
        <dbReference type="ChEBI" id="CHEBI:29035"/>
    </ligand>
</feature>
<feature type="binding site" evidence="1">
    <location>
        <position position="210"/>
    </location>
    <ligand>
        <name>Mn(2+)</name>
        <dbReference type="ChEBI" id="CHEBI:29035"/>
    </ligand>
</feature>
<feature type="binding site" evidence="1">
    <location>
        <position position="244"/>
    </location>
    <ligand>
        <name>Mn(2+)</name>
        <dbReference type="ChEBI" id="CHEBI:29035"/>
    </ligand>
</feature>
<protein>
    <recommendedName>
        <fullName evidence="1">2-isopropylmalate synthase</fullName>
        <ecNumber evidence="1">2.3.3.13</ecNumber>
    </recommendedName>
    <alternativeName>
        <fullName evidence="1">Alpha-IPM synthase</fullName>
    </alternativeName>
    <alternativeName>
        <fullName evidence="1">Alpha-isopropylmalate synthase</fullName>
    </alternativeName>
</protein>
<comment type="function">
    <text evidence="1">Catalyzes the condensation of the acetyl group of acetyl-CoA with 3-methyl-2-oxobutanoate (2-ketoisovalerate) to form 3-carboxy-3-hydroxy-4-methylpentanoate (2-isopropylmalate).</text>
</comment>
<comment type="catalytic activity">
    <reaction evidence="1">
        <text>3-methyl-2-oxobutanoate + acetyl-CoA + H2O = (2S)-2-isopropylmalate + CoA + H(+)</text>
        <dbReference type="Rhea" id="RHEA:21524"/>
        <dbReference type="ChEBI" id="CHEBI:1178"/>
        <dbReference type="ChEBI" id="CHEBI:11851"/>
        <dbReference type="ChEBI" id="CHEBI:15377"/>
        <dbReference type="ChEBI" id="CHEBI:15378"/>
        <dbReference type="ChEBI" id="CHEBI:57287"/>
        <dbReference type="ChEBI" id="CHEBI:57288"/>
        <dbReference type="EC" id="2.3.3.13"/>
    </reaction>
</comment>
<comment type="cofactor">
    <cofactor evidence="1">
        <name>Mn(2+)</name>
        <dbReference type="ChEBI" id="CHEBI:29035"/>
    </cofactor>
</comment>
<comment type="pathway">
    <text evidence="1">Amino-acid biosynthesis; L-leucine biosynthesis; L-leucine from 3-methyl-2-oxobutanoate: step 1/4.</text>
</comment>
<comment type="subunit">
    <text evidence="1">Homodimer.</text>
</comment>
<comment type="subcellular location">
    <subcellularLocation>
        <location evidence="1">Cytoplasm</location>
    </subcellularLocation>
</comment>
<comment type="similarity">
    <text evidence="1">Belongs to the alpha-IPM synthase/homocitrate synthase family. LeuA type 1 subfamily.</text>
</comment>
<dbReference type="EC" id="2.3.3.13" evidence="1"/>
<dbReference type="EMBL" id="CP000553">
    <property type="protein sequence ID" value="ABM76077.1"/>
    <property type="molecule type" value="Genomic_DNA"/>
</dbReference>
<dbReference type="RefSeq" id="WP_011824098.1">
    <property type="nucleotide sequence ID" value="NC_008819.1"/>
</dbReference>
<dbReference type="SMR" id="A2C3L7"/>
<dbReference type="KEGG" id="pme:NATL1_15201"/>
<dbReference type="eggNOG" id="COG0119">
    <property type="taxonomic scope" value="Bacteria"/>
</dbReference>
<dbReference type="HOGENOM" id="CLU_022158_0_1_3"/>
<dbReference type="UniPathway" id="UPA00048">
    <property type="reaction ID" value="UER00070"/>
</dbReference>
<dbReference type="Proteomes" id="UP000002592">
    <property type="component" value="Chromosome"/>
</dbReference>
<dbReference type="GO" id="GO:0005737">
    <property type="term" value="C:cytoplasm"/>
    <property type="evidence" value="ECO:0007669"/>
    <property type="project" value="UniProtKB-SubCell"/>
</dbReference>
<dbReference type="GO" id="GO:0003852">
    <property type="term" value="F:2-isopropylmalate synthase activity"/>
    <property type="evidence" value="ECO:0007669"/>
    <property type="project" value="UniProtKB-UniRule"/>
</dbReference>
<dbReference type="GO" id="GO:0003985">
    <property type="term" value="F:acetyl-CoA C-acetyltransferase activity"/>
    <property type="evidence" value="ECO:0007669"/>
    <property type="project" value="UniProtKB-UniRule"/>
</dbReference>
<dbReference type="GO" id="GO:0030145">
    <property type="term" value="F:manganese ion binding"/>
    <property type="evidence" value="ECO:0007669"/>
    <property type="project" value="UniProtKB-UniRule"/>
</dbReference>
<dbReference type="GO" id="GO:0009098">
    <property type="term" value="P:L-leucine biosynthetic process"/>
    <property type="evidence" value="ECO:0007669"/>
    <property type="project" value="UniProtKB-UniRule"/>
</dbReference>
<dbReference type="CDD" id="cd07940">
    <property type="entry name" value="DRE_TIM_IPMS"/>
    <property type="match status" value="1"/>
</dbReference>
<dbReference type="FunFam" id="1.10.238.260:FF:000001">
    <property type="entry name" value="2-isopropylmalate synthase"/>
    <property type="match status" value="1"/>
</dbReference>
<dbReference type="FunFam" id="3.20.20.70:FF:000010">
    <property type="entry name" value="2-isopropylmalate synthase"/>
    <property type="match status" value="1"/>
</dbReference>
<dbReference type="FunFam" id="3.30.160.270:FF:000001">
    <property type="entry name" value="2-isopropylmalate synthase"/>
    <property type="match status" value="1"/>
</dbReference>
<dbReference type="Gene3D" id="1.10.238.260">
    <property type="match status" value="1"/>
</dbReference>
<dbReference type="Gene3D" id="3.30.160.270">
    <property type="match status" value="1"/>
</dbReference>
<dbReference type="Gene3D" id="3.20.20.70">
    <property type="entry name" value="Aldolase class I"/>
    <property type="match status" value="1"/>
</dbReference>
<dbReference type="HAMAP" id="MF_01025">
    <property type="entry name" value="LeuA_type1"/>
    <property type="match status" value="1"/>
</dbReference>
<dbReference type="InterPro" id="IPR050073">
    <property type="entry name" value="2-IPM_HCS-like"/>
</dbReference>
<dbReference type="InterPro" id="IPR013709">
    <property type="entry name" value="2-isopropylmalate_synth_dimer"/>
</dbReference>
<dbReference type="InterPro" id="IPR002034">
    <property type="entry name" value="AIPM/Hcit_synth_CS"/>
</dbReference>
<dbReference type="InterPro" id="IPR013785">
    <property type="entry name" value="Aldolase_TIM"/>
</dbReference>
<dbReference type="InterPro" id="IPR054691">
    <property type="entry name" value="LeuA/HCS_post-cat"/>
</dbReference>
<dbReference type="InterPro" id="IPR036230">
    <property type="entry name" value="LeuA_allosteric_dom_sf"/>
</dbReference>
<dbReference type="InterPro" id="IPR005671">
    <property type="entry name" value="LeuA_bact_synth"/>
</dbReference>
<dbReference type="InterPro" id="IPR000891">
    <property type="entry name" value="PYR_CT"/>
</dbReference>
<dbReference type="NCBIfam" id="TIGR00973">
    <property type="entry name" value="leuA_bact"/>
    <property type="match status" value="1"/>
</dbReference>
<dbReference type="NCBIfam" id="NF002086">
    <property type="entry name" value="PRK00915.1-3"/>
    <property type="match status" value="1"/>
</dbReference>
<dbReference type="PANTHER" id="PTHR10277:SF9">
    <property type="entry name" value="2-ISOPROPYLMALATE SYNTHASE 1, CHLOROPLASTIC-RELATED"/>
    <property type="match status" value="1"/>
</dbReference>
<dbReference type="PANTHER" id="PTHR10277">
    <property type="entry name" value="HOMOCITRATE SYNTHASE-RELATED"/>
    <property type="match status" value="1"/>
</dbReference>
<dbReference type="Pfam" id="PF22617">
    <property type="entry name" value="HCS_D2"/>
    <property type="match status" value="1"/>
</dbReference>
<dbReference type="Pfam" id="PF00682">
    <property type="entry name" value="HMGL-like"/>
    <property type="match status" value="1"/>
</dbReference>
<dbReference type="Pfam" id="PF08502">
    <property type="entry name" value="LeuA_dimer"/>
    <property type="match status" value="1"/>
</dbReference>
<dbReference type="SMART" id="SM00917">
    <property type="entry name" value="LeuA_dimer"/>
    <property type="match status" value="1"/>
</dbReference>
<dbReference type="SUPFAM" id="SSF110921">
    <property type="entry name" value="2-isopropylmalate synthase LeuA, allosteric (dimerisation) domain"/>
    <property type="match status" value="1"/>
</dbReference>
<dbReference type="SUPFAM" id="SSF51569">
    <property type="entry name" value="Aldolase"/>
    <property type="match status" value="1"/>
</dbReference>
<dbReference type="PROSITE" id="PS00815">
    <property type="entry name" value="AIPM_HOMOCIT_SYNTH_1"/>
    <property type="match status" value="1"/>
</dbReference>
<dbReference type="PROSITE" id="PS00816">
    <property type="entry name" value="AIPM_HOMOCIT_SYNTH_2"/>
    <property type="match status" value="1"/>
</dbReference>
<dbReference type="PROSITE" id="PS50991">
    <property type="entry name" value="PYR_CT"/>
    <property type="match status" value="1"/>
</dbReference>
<accession>A2C3L7</accession>
<proteinExistence type="inferred from homology"/>
<name>LEU1_PROM1</name>
<keyword id="KW-0028">Amino-acid biosynthesis</keyword>
<keyword id="KW-0100">Branched-chain amino acid biosynthesis</keyword>
<keyword id="KW-0963">Cytoplasm</keyword>
<keyword id="KW-0432">Leucine biosynthesis</keyword>
<keyword id="KW-0464">Manganese</keyword>
<keyword id="KW-0479">Metal-binding</keyword>
<keyword id="KW-0808">Transferase</keyword>
<evidence type="ECO:0000255" key="1">
    <source>
        <dbReference type="HAMAP-Rule" id="MF_01025"/>
    </source>
</evidence>
<reference key="1">
    <citation type="journal article" date="2007" name="PLoS Genet.">
        <title>Patterns and implications of gene gain and loss in the evolution of Prochlorococcus.</title>
        <authorList>
            <person name="Kettler G.C."/>
            <person name="Martiny A.C."/>
            <person name="Huang K."/>
            <person name="Zucker J."/>
            <person name="Coleman M.L."/>
            <person name="Rodrigue S."/>
            <person name="Chen F."/>
            <person name="Lapidus A."/>
            <person name="Ferriera S."/>
            <person name="Johnson J."/>
            <person name="Steglich C."/>
            <person name="Church G.M."/>
            <person name="Richardson P."/>
            <person name="Chisholm S.W."/>
        </authorList>
    </citation>
    <scope>NUCLEOTIDE SEQUENCE [LARGE SCALE GENOMIC DNA]</scope>
    <source>
        <strain>NATL1A</strain>
    </source>
</reference>
<sequence length="539" mass="58092">MAKDPGRVLIFDTTLRDGEQSPGASLNLEEKLAIAQQLARLGVDVIEAGFPFASPGDFAAVQKIAENVGGEEGPIICGLSRASKPDIKACANAIAPAPKKRIHTFIATSDIHLEHKLRKSRKEVLDIVPDMVGYAKSFVDDVEFSCEDAARSDLDFLYEVIELAISSGANTINIPDTVGYITPSEFGDLILNINENVPNINEAVLSVHGHNDLGLAVANFLEAVKNGARQLECTINGIGERAGNAALEELIMALHVRRSYFNPFFGRPPESPTPLTAVRTEEITKSSRLVSNLTGMVVQPNKAIVGANAFAHESGIHQDGVLKNRLTYEIIDAKTVGLSDNKISLGKLSGRSAVRARLEDLGYDLNREDLNDAFARFKDLADRKREITDRDLEAIVSEQVQLPEALFQLKLVQVSCGTSLMPTATVTVVGEDGEEKTAVSLGTGPVDAVVRALDSLTEEPNELIEFSVKSVTEGIDALGEVTIRIRRDGNLFSGHSADTDVVVAAAQAYINALNRLVAAHGRKSIHPQHDLAKVDKKGI</sequence>
<organism>
    <name type="scientific">Prochlorococcus marinus (strain NATL1A)</name>
    <dbReference type="NCBI Taxonomy" id="167555"/>
    <lineage>
        <taxon>Bacteria</taxon>
        <taxon>Bacillati</taxon>
        <taxon>Cyanobacteriota</taxon>
        <taxon>Cyanophyceae</taxon>
        <taxon>Synechococcales</taxon>
        <taxon>Prochlorococcaceae</taxon>
        <taxon>Prochlorococcus</taxon>
    </lineage>
</organism>
<gene>
    <name evidence="1" type="primary">leuA</name>
    <name type="ordered locus">NATL1_15201</name>
</gene>